<comment type="function">
    <text evidence="1">Catalyzes the conversion of uracil and 5-phospho-alpha-D-ribose 1-diphosphate (PRPP) to UMP and diphosphate.</text>
</comment>
<comment type="catalytic activity">
    <reaction evidence="1">
        <text>UMP + diphosphate = 5-phospho-alpha-D-ribose 1-diphosphate + uracil</text>
        <dbReference type="Rhea" id="RHEA:13017"/>
        <dbReference type="ChEBI" id="CHEBI:17568"/>
        <dbReference type="ChEBI" id="CHEBI:33019"/>
        <dbReference type="ChEBI" id="CHEBI:57865"/>
        <dbReference type="ChEBI" id="CHEBI:58017"/>
        <dbReference type="EC" id="2.4.2.9"/>
    </reaction>
</comment>
<comment type="cofactor">
    <cofactor evidence="1">
        <name>Mg(2+)</name>
        <dbReference type="ChEBI" id="CHEBI:18420"/>
    </cofactor>
    <text evidence="1">Binds 1 Mg(2+) ion per subunit. The magnesium is bound as Mg-PRPP.</text>
</comment>
<comment type="activity regulation">
    <text evidence="1">Allosterically activated by GTP.</text>
</comment>
<comment type="pathway">
    <text evidence="1">Pyrimidine metabolism; UMP biosynthesis via salvage pathway; UMP from uracil: step 1/1.</text>
</comment>
<comment type="similarity">
    <text evidence="1">Belongs to the UPRTase family.</text>
</comment>
<protein>
    <recommendedName>
        <fullName evidence="1">Uracil phosphoribosyltransferase</fullName>
        <ecNumber evidence="1">2.4.2.9</ecNumber>
    </recommendedName>
    <alternativeName>
        <fullName evidence="1">UMP pyrophosphorylase</fullName>
    </alternativeName>
    <alternativeName>
        <fullName evidence="1">UPRTase</fullName>
    </alternativeName>
</protein>
<feature type="chain" id="PRO_0000120822" description="Uracil phosphoribosyltransferase">
    <location>
        <begin position="1"/>
        <end position="208"/>
    </location>
</feature>
<feature type="binding site" evidence="1">
    <location>
        <position position="78"/>
    </location>
    <ligand>
        <name>5-phospho-alpha-D-ribose 1-diphosphate</name>
        <dbReference type="ChEBI" id="CHEBI:58017"/>
    </ligand>
</feature>
<feature type="binding site" evidence="1">
    <location>
        <position position="103"/>
    </location>
    <ligand>
        <name>5-phospho-alpha-D-ribose 1-diphosphate</name>
        <dbReference type="ChEBI" id="CHEBI:58017"/>
    </ligand>
</feature>
<feature type="binding site" evidence="1">
    <location>
        <begin position="130"/>
        <end position="138"/>
    </location>
    <ligand>
        <name>5-phospho-alpha-D-ribose 1-diphosphate</name>
        <dbReference type="ChEBI" id="CHEBI:58017"/>
    </ligand>
</feature>
<feature type="binding site" evidence="1">
    <location>
        <position position="193"/>
    </location>
    <ligand>
        <name>uracil</name>
        <dbReference type="ChEBI" id="CHEBI:17568"/>
    </ligand>
</feature>
<feature type="binding site" evidence="1">
    <location>
        <begin position="198"/>
        <end position="200"/>
    </location>
    <ligand>
        <name>uracil</name>
        <dbReference type="ChEBI" id="CHEBI:17568"/>
    </ligand>
</feature>
<feature type="binding site" evidence="1">
    <location>
        <position position="199"/>
    </location>
    <ligand>
        <name>5-phospho-alpha-D-ribose 1-diphosphate</name>
        <dbReference type="ChEBI" id="CHEBI:58017"/>
    </ligand>
</feature>
<accession>Q6AQH2</accession>
<name>UPP_DESPS</name>
<gene>
    <name evidence="1" type="primary">upp</name>
    <name type="ordered locus">DP0672</name>
</gene>
<dbReference type="EC" id="2.4.2.9" evidence="1"/>
<dbReference type="EMBL" id="CR522870">
    <property type="protein sequence ID" value="CAG35401.1"/>
    <property type="molecule type" value="Genomic_DNA"/>
</dbReference>
<dbReference type="RefSeq" id="WP_011187917.1">
    <property type="nucleotide sequence ID" value="NC_006138.1"/>
</dbReference>
<dbReference type="SMR" id="Q6AQH2"/>
<dbReference type="STRING" id="177439.DP0672"/>
<dbReference type="KEGG" id="dps:DP0672"/>
<dbReference type="eggNOG" id="COG0035">
    <property type="taxonomic scope" value="Bacteria"/>
</dbReference>
<dbReference type="HOGENOM" id="CLU_067096_2_2_7"/>
<dbReference type="OrthoDB" id="9781675at2"/>
<dbReference type="UniPathway" id="UPA00574">
    <property type="reaction ID" value="UER00636"/>
</dbReference>
<dbReference type="Proteomes" id="UP000000602">
    <property type="component" value="Chromosome"/>
</dbReference>
<dbReference type="GO" id="GO:0005525">
    <property type="term" value="F:GTP binding"/>
    <property type="evidence" value="ECO:0007669"/>
    <property type="project" value="UniProtKB-KW"/>
</dbReference>
<dbReference type="GO" id="GO:0000287">
    <property type="term" value="F:magnesium ion binding"/>
    <property type="evidence" value="ECO:0007669"/>
    <property type="project" value="UniProtKB-UniRule"/>
</dbReference>
<dbReference type="GO" id="GO:0004845">
    <property type="term" value="F:uracil phosphoribosyltransferase activity"/>
    <property type="evidence" value="ECO:0007669"/>
    <property type="project" value="UniProtKB-UniRule"/>
</dbReference>
<dbReference type="GO" id="GO:0044206">
    <property type="term" value="P:UMP salvage"/>
    <property type="evidence" value="ECO:0007669"/>
    <property type="project" value="UniProtKB-UniRule"/>
</dbReference>
<dbReference type="GO" id="GO:0006223">
    <property type="term" value="P:uracil salvage"/>
    <property type="evidence" value="ECO:0007669"/>
    <property type="project" value="InterPro"/>
</dbReference>
<dbReference type="CDD" id="cd06223">
    <property type="entry name" value="PRTases_typeI"/>
    <property type="match status" value="1"/>
</dbReference>
<dbReference type="FunFam" id="3.40.50.2020:FF:000003">
    <property type="entry name" value="Uracil phosphoribosyltransferase"/>
    <property type="match status" value="1"/>
</dbReference>
<dbReference type="Gene3D" id="3.40.50.2020">
    <property type="match status" value="1"/>
</dbReference>
<dbReference type="HAMAP" id="MF_01218_B">
    <property type="entry name" value="Upp_B"/>
    <property type="match status" value="1"/>
</dbReference>
<dbReference type="InterPro" id="IPR000836">
    <property type="entry name" value="PRibTrfase_dom"/>
</dbReference>
<dbReference type="InterPro" id="IPR029057">
    <property type="entry name" value="PRTase-like"/>
</dbReference>
<dbReference type="InterPro" id="IPR034332">
    <property type="entry name" value="Upp_B"/>
</dbReference>
<dbReference type="InterPro" id="IPR050054">
    <property type="entry name" value="UPRTase/APRTase"/>
</dbReference>
<dbReference type="InterPro" id="IPR005765">
    <property type="entry name" value="Ura_phspho_trans"/>
</dbReference>
<dbReference type="NCBIfam" id="NF001097">
    <property type="entry name" value="PRK00129.1"/>
    <property type="match status" value="1"/>
</dbReference>
<dbReference type="NCBIfam" id="TIGR01091">
    <property type="entry name" value="upp"/>
    <property type="match status" value="1"/>
</dbReference>
<dbReference type="PANTHER" id="PTHR32315">
    <property type="entry name" value="ADENINE PHOSPHORIBOSYLTRANSFERASE"/>
    <property type="match status" value="1"/>
</dbReference>
<dbReference type="PANTHER" id="PTHR32315:SF4">
    <property type="entry name" value="URACIL PHOSPHORIBOSYLTRANSFERASE, CHLOROPLASTIC"/>
    <property type="match status" value="1"/>
</dbReference>
<dbReference type="Pfam" id="PF14681">
    <property type="entry name" value="UPRTase"/>
    <property type="match status" value="1"/>
</dbReference>
<dbReference type="SUPFAM" id="SSF53271">
    <property type="entry name" value="PRTase-like"/>
    <property type="match status" value="1"/>
</dbReference>
<proteinExistence type="inferred from homology"/>
<reference key="1">
    <citation type="journal article" date="2004" name="Environ. Microbiol.">
        <title>The genome of Desulfotalea psychrophila, a sulfate-reducing bacterium from permanently cold Arctic sediments.</title>
        <authorList>
            <person name="Rabus R."/>
            <person name="Ruepp A."/>
            <person name="Frickey T."/>
            <person name="Rattei T."/>
            <person name="Fartmann B."/>
            <person name="Stark M."/>
            <person name="Bauer M."/>
            <person name="Zibat A."/>
            <person name="Lombardot T."/>
            <person name="Becker I."/>
            <person name="Amann J."/>
            <person name="Gellner K."/>
            <person name="Teeling H."/>
            <person name="Leuschner W.D."/>
            <person name="Gloeckner F.-O."/>
            <person name="Lupas A.N."/>
            <person name="Amann R."/>
            <person name="Klenk H.-P."/>
        </authorList>
    </citation>
    <scope>NUCLEOTIDE SEQUENCE [LARGE SCALE GENOMIC DNA]</scope>
    <source>
        <strain>DSM 12343 / LSv54</strain>
    </source>
</reference>
<sequence>MSLHIADHPLVKHKLGLMRQNDISTKDFRALASEIARLLTYEAVKDLPTEKHIVDGWAGPVEVDRLKGKKITIVPILRAGLGMMDGVIDLIPSAKVTVVGFYRDEETLEPVEYYVKTASEMSERVALIIDPMLATGGTLIATIDTLKKAGSKKIKGLFLVAAPEGIKKVQDAHPDVEIYVAAVDERLNEAGYILPGLGDAGDKIFGTR</sequence>
<evidence type="ECO:0000255" key="1">
    <source>
        <dbReference type="HAMAP-Rule" id="MF_01218"/>
    </source>
</evidence>
<organism>
    <name type="scientific">Desulfotalea psychrophila (strain LSv54 / DSM 12343)</name>
    <dbReference type="NCBI Taxonomy" id="177439"/>
    <lineage>
        <taxon>Bacteria</taxon>
        <taxon>Pseudomonadati</taxon>
        <taxon>Thermodesulfobacteriota</taxon>
        <taxon>Desulfobulbia</taxon>
        <taxon>Desulfobulbales</taxon>
        <taxon>Desulfocapsaceae</taxon>
        <taxon>Desulfotalea</taxon>
    </lineage>
</organism>
<keyword id="KW-0021">Allosteric enzyme</keyword>
<keyword id="KW-0328">Glycosyltransferase</keyword>
<keyword id="KW-0342">GTP-binding</keyword>
<keyword id="KW-0460">Magnesium</keyword>
<keyword id="KW-0547">Nucleotide-binding</keyword>
<keyword id="KW-1185">Reference proteome</keyword>
<keyword id="KW-0808">Transferase</keyword>